<accession>Q2FXZ3</accession>
<reference key="1">
    <citation type="book" date="2006" name="Gram positive pathogens, 2nd edition">
        <title>The Staphylococcus aureus NCTC 8325 genome.</title>
        <editorList>
            <person name="Fischetti V."/>
            <person name="Novick R."/>
            <person name="Ferretti J."/>
            <person name="Portnoy D."/>
            <person name="Rood J."/>
        </editorList>
        <authorList>
            <person name="Gillaspy A.F."/>
            <person name="Worrell V."/>
            <person name="Orvis J."/>
            <person name="Roe B.A."/>
            <person name="Dyer D.W."/>
            <person name="Iandolo J.J."/>
        </authorList>
    </citation>
    <scope>NUCLEOTIDE SEQUENCE [LARGE SCALE GENOMIC DNA]</scope>
    <source>
        <strain>NCTC 8325 / PS 47</strain>
    </source>
</reference>
<sequence length="379" mass="41761">MAKRDYYEVLGISKDASKDEIKKAYRKLSKKYHPDINKEEGADEKFKEISEAYEVLSDDNKRASYDQFGHDGPQGFGGQGFNGSDFGGFSGFGGGGFEDIFSSFFGGGRQRDPNAPQKGDDLQYTMTLTFEEAVFGTTKEISIRKDVTCETCHGDGAKPGTSKKTCSYCNGAGHVAVEQNTILGRVRTEQVCPKCNGSGQEFEEACPTCHGKGTENKTVKLEVKVPEGVDNEQQIRLAGEGSPGVNGGPAGDLYVVFRVKPSETFKRDGDDIYYKLNVSFPQAALGDEIKIPTLNNEVMLTIPAGTQTGKQFRLKEKGIKNVHGYGYGDLYVDIKVVTPTKLTDRQKELMKEFAQLNGEEINEQPSNFKDRAKRFFKGE</sequence>
<proteinExistence type="inferred from homology"/>
<keyword id="KW-0143">Chaperone</keyword>
<keyword id="KW-0963">Cytoplasm</keyword>
<keyword id="KW-0235">DNA replication</keyword>
<keyword id="KW-0479">Metal-binding</keyword>
<keyword id="KW-1185">Reference proteome</keyword>
<keyword id="KW-0677">Repeat</keyword>
<keyword id="KW-0346">Stress response</keyword>
<keyword id="KW-0862">Zinc</keyword>
<keyword id="KW-0863">Zinc-finger</keyword>
<evidence type="ECO:0000255" key="1">
    <source>
        <dbReference type="HAMAP-Rule" id="MF_01152"/>
    </source>
</evidence>
<organism>
    <name type="scientific">Staphylococcus aureus (strain NCTC 8325 / PS 47)</name>
    <dbReference type="NCBI Taxonomy" id="93061"/>
    <lineage>
        <taxon>Bacteria</taxon>
        <taxon>Bacillati</taxon>
        <taxon>Bacillota</taxon>
        <taxon>Bacilli</taxon>
        <taxon>Bacillales</taxon>
        <taxon>Staphylococcaceae</taxon>
        <taxon>Staphylococcus</taxon>
    </lineage>
</organism>
<feature type="chain" id="PRO_1000085311" description="Chaperone protein DnaJ">
    <location>
        <begin position="1"/>
        <end position="379"/>
    </location>
</feature>
<feature type="domain" description="J" evidence="1">
    <location>
        <begin position="5"/>
        <end position="69"/>
    </location>
</feature>
<feature type="repeat" description="CXXCXGXG motif">
    <location>
        <begin position="149"/>
        <end position="156"/>
    </location>
</feature>
<feature type="repeat" description="CXXCXGXG motif">
    <location>
        <begin position="166"/>
        <end position="173"/>
    </location>
</feature>
<feature type="repeat" description="CXXCXGXG motif">
    <location>
        <begin position="192"/>
        <end position="199"/>
    </location>
</feature>
<feature type="repeat" description="CXXCXGXG motif">
    <location>
        <begin position="206"/>
        <end position="213"/>
    </location>
</feature>
<feature type="zinc finger region" description="CR-type" evidence="1">
    <location>
        <begin position="136"/>
        <end position="218"/>
    </location>
</feature>
<feature type="binding site" evidence="1">
    <location>
        <position position="149"/>
    </location>
    <ligand>
        <name>Zn(2+)</name>
        <dbReference type="ChEBI" id="CHEBI:29105"/>
        <label>1</label>
    </ligand>
</feature>
<feature type="binding site" evidence="1">
    <location>
        <position position="152"/>
    </location>
    <ligand>
        <name>Zn(2+)</name>
        <dbReference type="ChEBI" id="CHEBI:29105"/>
        <label>1</label>
    </ligand>
</feature>
<feature type="binding site" evidence="1">
    <location>
        <position position="166"/>
    </location>
    <ligand>
        <name>Zn(2+)</name>
        <dbReference type="ChEBI" id="CHEBI:29105"/>
        <label>2</label>
    </ligand>
</feature>
<feature type="binding site" evidence="1">
    <location>
        <position position="169"/>
    </location>
    <ligand>
        <name>Zn(2+)</name>
        <dbReference type="ChEBI" id="CHEBI:29105"/>
        <label>2</label>
    </ligand>
</feature>
<feature type="binding site" evidence="1">
    <location>
        <position position="192"/>
    </location>
    <ligand>
        <name>Zn(2+)</name>
        <dbReference type="ChEBI" id="CHEBI:29105"/>
        <label>2</label>
    </ligand>
</feature>
<feature type="binding site" evidence="1">
    <location>
        <position position="195"/>
    </location>
    <ligand>
        <name>Zn(2+)</name>
        <dbReference type="ChEBI" id="CHEBI:29105"/>
        <label>2</label>
    </ligand>
</feature>
<feature type="binding site" evidence="1">
    <location>
        <position position="206"/>
    </location>
    <ligand>
        <name>Zn(2+)</name>
        <dbReference type="ChEBI" id="CHEBI:29105"/>
        <label>1</label>
    </ligand>
</feature>
<feature type="binding site" evidence="1">
    <location>
        <position position="209"/>
    </location>
    <ligand>
        <name>Zn(2+)</name>
        <dbReference type="ChEBI" id="CHEBI:29105"/>
        <label>1</label>
    </ligand>
</feature>
<gene>
    <name evidence="1" type="primary">dnaJ</name>
    <name type="ordered locus">SAOUHSC_01682</name>
</gene>
<name>DNAJ_STAA8</name>
<dbReference type="EMBL" id="CP000253">
    <property type="protein sequence ID" value="ABD30756.1"/>
    <property type="molecule type" value="Genomic_DNA"/>
</dbReference>
<dbReference type="RefSeq" id="WP_001119021.1">
    <property type="nucleotide sequence ID" value="NZ_LS483365.1"/>
</dbReference>
<dbReference type="RefSeq" id="YP_500192.1">
    <property type="nucleotide sequence ID" value="NC_007795.1"/>
</dbReference>
<dbReference type="SMR" id="Q2FXZ3"/>
<dbReference type="STRING" id="93061.SAOUHSC_01682"/>
<dbReference type="PaxDb" id="1280-SAXN108_1605"/>
<dbReference type="GeneID" id="3921794"/>
<dbReference type="KEGG" id="sao:SAOUHSC_01682"/>
<dbReference type="PATRIC" id="fig|93061.5.peg.1530"/>
<dbReference type="eggNOG" id="COG0484">
    <property type="taxonomic scope" value="Bacteria"/>
</dbReference>
<dbReference type="HOGENOM" id="CLU_017633_0_7_9"/>
<dbReference type="OrthoDB" id="9779889at2"/>
<dbReference type="PRO" id="PR:Q2FXZ3"/>
<dbReference type="Proteomes" id="UP000008816">
    <property type="component" value="Chromosome"/>
</dbReference>
<dbReference type="GO" id="GO:0005737">
    <property type="term" value="C:cytoplasm"/>
    <property type="evidence" value="ECO:0000318"/>
    <property type="project" value="GO_Central"/>
</dbReference>
<dbReference type="GO" id="GO:0005524">
    <property type="term" value="F:ATP binding"/>
    <property type="evidence" value="ECO:0007669"/>
    <property type="project" value="InterPro"/>
</dbReference>
<dbReference type="GO" id="GO:0031072">
    <property type="term" value="F:heat shock protein binding"/>
    <property type="evidence" value="ECO:0007669"/>
    <property type="project" value="InterPro"/>
</dbReference>
<dbReference type="GO" id="GO:0051082">
    <property type="term" value="F:unfolded protein binding"/>
    <property type="evidence" value="ECO:0000318"/>
    <property type="project" value="GO_Central"/>
</dbReference>
<dbReference type="GO" id="GO:0008270">
    <property type="term" value="F:zinc ion binding"/>
    <property type="evidence" value="ECO:0007669"/>
    <property type="project" value="UniProtKB-UniRule"/>
</dbReference>
<dbReference type="GO" id="GO:0051085">
    <property type="term" value="P:chaperone cofactor-dependent protein refolding"/>
    <property type="evidence" value="ECO:0000318"/>
    <property type="project" value="GO_Central"/>
</dbReference>
<dbReference type="GO" id="GO:0006260">
    <property type="term" value="P:DNA replication"/>
    <property type="evidence" value="ECO:0007669"/>
    <property type="project" value="UniProtKB-KW"/>
</dbReference>
<dbReference type="GO" id="GO:0042026">
    <property type="term" value="P:protein refolding"/>
    <property type="evidence" value="ECO:0000318"/>
    <property type="project" value="GO_Central"/>
</dbReference>
<dbReference type="GO" id="GO:0009408">
    <property type="term" value="P:response to heat"/>
    <property type="evidence" value="ECO:0007669"/>
    <property type="project" value="InterPro"/>
</dbReference>
<dbReference type="CDD" id="cd06257">
    <property type="entry name" value="DnaJ"/>
    <property type="match status" value="1"/>
</dbReference>
<dbReference type="CDD" id="cd10747">
    <property type="entry name" value="DnaJ_C"/>
    <property type="match status" value="1"/>
</dbReference>
<dbReference type="CDD" id="cd10719">
    <property type="entry name" value="DnaJ_zf"/>
    <property type="match status" value="1"/>
</dbReference>
<dbReference type="FunFam" id="1.10.287.110:FF:000031">
    <property type="entry name" value="Molecular chaperone DnaJ"/>
    <property type="match status" value="1"/>
</dbReference>
<dbReference type="FunFam" id="2.10.230.10:FF:000002">
    <property type="entry name" value="Molecular chaperone DnaJ"/>
    <property type="match status" value="1"/>
</dbReference>
<dbReference type="FunFam" id="2.60.260.20:FF:000004">
    <property type="entry name" value="Molecular chaperone DnaJ"/>
    <property type="match status" value="1"/>
</dbReference>
<dbReference type="Gene3D" id="1.10.287.110">
    <property type="entry name" value="DnaJ domain"/>
    <property type="match status" value="1"/>
</dbReference>
<dbReference type="Gene3D" id="2.10.230.10">
    <property type="entry name" value="Heat shock protein DnaJ, cysteine-rich domain"/>
    <property type="match status" value="1"/>
</dbReference>
<dbReference type="Gene3D" id="2.60.260.20">
    <property type="entry name" value="Urease metallochaperone UreE, N-terminal domain"/>
    <property type="match status" value="2"/>
</dbReference>
<dbReference type="HAMAP" id="MF_01152">
    <property type="entry name" value="DnaJ"/>
    <property type="match status" value="1"/>
</dbReference>
<dbReference type="InterPro" id="IPR012724">
    <property type="entry name" value="DnaJ"/>
</dbReference>
<dbReference type="InterPro" id="IPR002939">
    <property type="entry name" value="DnaJ_C"/>
</dbReference>
<dbReference type="InterPro" id="IPR001623">
    <property type="entry name" value="DnaJ_domain"/>
</dbReference>
<dbReference type="InterPro" id="IPR018253">
    <property type="entry name" value="DnaJ_domain_CS"/>
</dbReference>
<dbReference type="InterPro" id="IPR008971">
    <property type="entry name" value="HSP40/DnaJ_pept-bd"/>
</dbReference>
<dbReference type="InterPro" id="IPR001305">
    <property type="entry name" value="HSP_DnaJ_Cys-rich_dom"/>
</dbReference>
<dbReference type="InterPro" id="IPR036410">
    <property type="entry name" value="HSP_DnaJ_Cys-rich_dom_sf"/>
</dbReference>
<dbReference type="InterPro" id="IPR036869">
    <property type="entry name" value="J_dom_sf"/>
</dbReference>
<dbReference type="NCBIfam" id="TIGR02349">
    <property type="entry name" value="DnaJ_bact"/>
    <property type="match status" value="1"/>
</dbReference>
<dbReference type="NCBIfam" id="NF008035">
    <property type="entry name" value="PRK10767.1"/>
    <property type="match status" value="1"/>
</dbReference>
<dbReference type="NCBIfam" id="NF010873">
    <property type="entry name" value="PRK14280.1"/>
    <property type="match status" value="1"/>
</dbReference>
<dbReference type="PANTHER" id="PTHR43096:SF48">
    <property type="entry name" value="CHAPERONE PROTEIN DNAJ"/>
    <property type="match status" value="1"/>
</dbReference>
<dbReference type="PANTHER" id="PTHR43096">
    <property type="entry name" value="DNAJ HOMOLOG 1, MITOCHONDRIAL-RELATED"/>
    <property type="match status" value="1"/>
</dbReference>
<dbReference type="Pfam" id="PF00226">
    <property type="entry name" value="DnaJ"/>
    <property type="match status" value="1"/>
</dbReference>
<dbReference type="Pfam" id="PF01556">
    <property type="entry name" value="DnaJ_C"/>
    <property type="match status" value="1"/>
</dbReference>
<dbReference type="Pfam" id="PF00684">
    <property type="entry name" value="DnaJ_CXXCXGXG"/>
    <property type="match status" value="1"/>
</dbReference>
<dbReference type="PRINTS" id="PR00625">
    <property type="entry name" value="JDOMAIN"/>
</dbReference>
<dbReference type="SMART" id="SM00271">
    <property type="entry name" value="DnaJ"/>
    <property type="match status" value="1"/>
</dbReference>
<dbReference type="SUPFAM" id="SSF46565">
    <property type="entry name" value="Chaperone J-domain"/>
    <property type="match status" value="1"/>
</dbReference>
<dbReference type="SUPFAM" id="SSF57938">
    <property type="entry name" value="DnaJ/Hsp40 cysteine-rich domain"/>
    <property type="match status" value="1"/>
</dbReference>
<dbReference type="SUPFAM" id="SSF49493">
    <property type="entry name" value="HSP40/DnaJ peptide-binding domain"/>
    <property type="match status" value="2"/>
</dbReference>
<dbReference type="PROSITE" id="PS00636">
    <property type="entry name" value="DNAJ_1"/>
    <property type="match status" value="1"/>
</dbReference>
<dbReference type="PROSITE" id="PS50076">
    <property type="entry name" value="DNAJ_2"/>
    <property type="match status" value="1"/>
</dbReference>
<dbReference type="PROSITE" id="PS51188">
    <property type="entry name" value="ZF_CR"/>
    <property type="match status" value="1"/>
</dbReference>
<protein>
    <recommendedName>
        <fullName evidence="1">Chaperone protein DnaJ</fullName>
    </recommendedName>
</protein>
<comment type="function">
    <text evidence="1">Participates actively in the response to hyperosmotic and heat shock by preventing the aggregation of stress-denatured proteins and by disaggregating proteins, also in an autonomous, DnaK-independent fashion. Unfolded proteins bind initially to DnaJ; upon interaction with the DnaJ-bound protein, DnaK hydrolyzes its bound ATP, resulting in the formation of a stable complex. GrpE releases ADP from DnaK; ATP binding to DnaK triggers the release of the substrate protein, thus completing the reaction cycle. Several rounds of ATP-dependent interactions between DnaJ, DnaK and GrpE are required for fully efficient folding. Also involved, together with DnaK and GrpE, in the DNA replication of plasmids through activation of initiation proteins.</text>
</comment>
<comment type="cofactor">
    <cofactor evidence="1">
        <name>Zn(2+)</name>
        <dbReference type="ChEBI" id="CHEBI:29105"/>
    </cofactor>
    <text evidence="1">Binds 2 Zn(2+) ions per monomer.</text>
</comment>
<comment type="subunit">
    <text evidence="1">Homodimer.</text>
</comment>
<comment type="subcellular location">
    <subcellularLocation>
        <location evidence="1">Cytoplasm</location>
    </subcellularLocation>
</comment>
<comment type="domain">
    <text evidence="1">The J domain is necessary and sufficient to stimulate DnaK ATPase activity. Zinc center 1 plays an important role in the autonomous, DnaK-independent chaperone activity of DnaJ. Zinc center 2 is essential for interaction with DnaK and for DnaJ activity.</text>
</comment>
<comment type="similarity">
    <text evidence="1">Belongs to the DnaJ family.</text>
</comment>